<gene>
    <name evidence="1" type="primary">rihB</name>
    <name type="ordered locus">ECUMN_2498</name>
</gene>
<accession>B7N5C5</accession>
<evidence type="ECO:0000255" key="1">
    <source>
        <dbReference type="HAMAP-Rule" id="MF_01433"/>
    </source>
</evidence>
<keyword id="KW-0106">Calcium</keyword>
<keyword id="KW-0326">Glycosidase</keyword>
<keyword id="KW-0378">Hydrolase</keyword>
<keyword id="KW-0479">Metal-binding</keyword>
<proteinExistence type="inferred from homology"/>
<comment type="function">
    <text evidence="1">Hydrolyzes cytidine or uridine to ribose and cytosine or uracil, respectively. Has a clear preference for cytidine over uridine. Strictly specific for ribonucleosides.</text>
</comment>
<comment type="catalytic activity">
    <reaction evidence="1">
        <text>a pyrimidine ribonucleoside + H2O = a pyrimidine nucleobase + D-ribose</text>
        <dbReference type="Rhea" id="RHEA:56816"/>
        <dbReference type="ChEBI" id="CHEBI:15377"/>
        <dbReference type="ChEBI" id="CHEBI:26432"/>
        <dbReference type="ChEBI" id="CHEBI:47013"/>
        <dbReference type="ChEBI" id="CHEBI:141014"/>
        <dbReference type="EC" id="3.2.2.8"/>
    </reaction>
</comment>
<comment type="cofactor">
    <cofactor evidence="1">
        <name>Ca(2+)</name>
        <dbReference type="ChEBI" id="CHEBI:29108"/>
    </cofactor>
    <text evidence="1">Binds 1 Ca(2+) ion per monomer.</text>
</comment>
<comment type="subunit">
    <text evidence="1">Homotetramer.</text>
</comment>
<comment type="similarity">
    <text evidence="1">Belongs to the IUNH family. RihB subfamily.</text>
</comment>
<protein>
    <recommendedName>
        <fullName evidence="1">Pyrimidine-specific ribonucleoside hydrolase RihB</fullName>
        <ecNumber evidence="1">3.2.2.8</ecNumber>
    </recommendedName>
    <alternativeName>
        <fullName evidence="1">Cytidine/uridine-specific hydrolase</fullName>
    </alternativeName>
</protein>
<organism>
    <name type="scientific">Escherichia coli O17:K52:H18 (strain UMN026 / ExPEC)</name>
    <dbReference type="NCBI Taxonomy" id="585056"/>
    <lineage>
        <taxon>Bacteria</taxon>
        <taxon>Pseudomonadati</taxon>
        <taxon>Pseudomonadota</taxon>
        <taxon>Gammaproteobacteria</taxon>
        <taxon>Enterobacterales</taxon>
        <taxon>Enterobacteriaceae</taxon>
        <taxon>Escherichia</taxon>
    </lineage>
</organism>
<dbReference type="EC" id="3.2.2.8" evidence="1"/>
<dbReference type="EMBL" id="CU928163">
    <property type="protein sequence ID" value="CAR13684.1"/>
    <property type="molecule type" value="Genomic_DNA"/>
</dbReference>
<dbReference type="RefSeq" id="WP_000415440.1">
    <property type="nucleotide sequence ID" value="NC_011751.1"/>
</dbReference>
<dbReference type="RefSeq" id="YP_002413212.1">
    <property type="nucleotide sequence ID" value="NC_011751.1"/>
</dbReference>
<dbReference type="SMR" id="B7N5C5"/>
<dbReference type="STRING" id="585056.ECUMN_2498"/>
<dbReference type="KEGG" id="eum:ECUMN_2498"/>
<dbReference type="PATRIC" id="fig|585056.7.peg.2678"/>
<dbReference type="HOGENOM" id="CLU_036838_2_0_6"/>
<dbReference type="Proteomes" id="UP000007097">
    <property type="component" value="Chromosome"/>
</dbReference>
<dbReference type="GO" id="GO:0005829">
    <property type="term" value="C:cytosol"/>
    <property type="evidence" value="ECO:0007669"/>
    <property type="project" value="TreeGrafter"/>
</dbReference>
<dbReference type="GO" id="GO:0005509">
    <property type="term" value="F:calcium ion binding"/>
    <property type="evidence" value="ECO:0007669"/>
    <property type="project" value="UniProtKB-UniRule"/>
</dbReference>
<dbReference type="GO" id="GO:0008477">
    <property type="term" value="F:purine nucleosidase activity"/>
    <property type="evidence" value="ECO:0007669"/>
    <property type="project" value="TreeGrafter"/>
</dbReference>
<dbReference type="GO" id="GO:0045437">
    <property type="term" value="F:uridine nucleosidase activity"/>
    <property type="evidence" value="ECO:0007669"/>
    <property type="project" value="UniProtKB-ARBA"/>
</dbReference>
<dbReference type="GO" id="GO:0006152">
    <property type="term" value="P:purine nucleoside catabolic process"/>
    <property type="evidence" value="ECO:0007669"/>
    <property type="project" value="TreeGrafter"/>
</dbReference>
<dbReference type="GO" id="GO:0006206">
    <property type="term" value="P:pyrimidine nucleobase metabolic process"/>
    <property type="evidence" value="ECO:0007669"/>
    <property type="project" value="UniProtKB-UniRule"/>
</dbReference>
<dbReference type="GO" id="GO:0046133">
    <property type="term" value="P:pyrimidine ribonucleoside catabolic process"/>
    <property type="evidence" value="ECO:0007669"/>
    <property type="project" value="InterPro"/>
</dbReference>
<dbReference type="CDD" id="cd02651">
    <property type="entry name" value="nuc_hydro_IU_UC_XIUA"/>
    <property type="match status" value="1"/>
</dbReference>
<dbReference type="FunFam" id="3.90.245.10:FF:000003">
    <property type="entry name" value="Pyrimidine-specific ribonucleoside hydrolase RihB"/>
    <property type="match status" value="1"/>
</dbReference>
<dbReference type="Gene3D" id="3.90.245.10">
    <property type="entry name" value="Ribonucleoside hydrolase-like"/>
    <property type="match status" value="1"/>
</dbReference>
<dbReference type="HAMAP" id="MF_01433">
    <property type="entry name" value="Pyrim_hydro_RihB"/>
    <property type="match status" value="1"/>
</dbReference>
<dbReference type="InterPro" id="IPR015910">
    <property type="entry name" value="I/U_nuclsd_hydro_CS"/>
</dbReference>
<dbReference type="InterPro" id="IPR001910">
    <property type="entry name" value="Inosine/uridine_hydrolase_dom"/>
</dbReference>
<dbReference type="InterPro" id="IPR023186">
    <property type="entry name" value="IUNH"/>
</dbReference>
<dbReference type="InterPro" id="IPR022977">
    <property type="entry name" value="Pyrim_hydro_RihB"/>
</dbReference>
<dbReference type="InterPro" id="IPR036452">
    <property type="entry name" value="Ribo_hydro-like"/>
</dbReference>
<dbReference type="NCBIfam" id="NF007417">
    <property type="entry name" value="PRK09955.1"/>
    <property type="match status" value="1"/>
</dbReference>
<dbReference type="PANTHER" id="PTHR12304">
    <property type="entry name" value="INOSINE-URIDINE PREFERRING NUCLEOSIDE HYDROLASE"/>
    <property type="match status" value="1"/>
</dbReference>
<dbReference type="PANTHER" id="PTHR12304:SF4">
    <property type="entry name" value="URIDINE NUCLEOSIDASE"/>
    <property type="match status" value="1"/>
</dbReference>
<dbReference type="Pfam" id="PF01156">
    <property type="entry name" value="IU_nuc_hydro"/>
    <property type="match status" value="1"/>
</dbReference>
<dbReference type="SUPFAM" id="SSF53590">
    <property type="entry name" value="Nucleoside hydrolase"/>
    <property type="match status" value="1"/>
</dbReference>
<dbReference type="PROSITE" id="PS01247">
    <property type="entry name" value="IUNH"/>
    <property type="match status" value="1"/>
</dbReference>
<name>RIHB_ECOLU</name>
<feature type="chain" id="PRO_1000145832" description="Pyrimidine-specific ribonucleoside hydrolase RihB">
    <location>
        <begin position="1"/>
        <end position="313"/>
    </location>
</feature>
<feature type="active site" description="Proton acceptor" evidence="1">
    <location>
        <position position="11"/>
    </location>
</feature>
<feature type="binding site" evidence="1">
    <location>
        <position position="11"/>
    </location>
    <ligand>
        <name>Ca(2+)</name>
        <dbReference type="ChEBI" id="CHEBI:29108"/>
    </ligand>
</feature>
<feature type="binding site" evidence="1">
    <location>
        <position position="16"/>
    </location>
    <ligand>
        <name>Ca(2+)</name>
        <dbReference type="ChEBI" id="CHEBI:29108"/>
    </ligand>
</feature>
<feature type="binding site" evidence="1">
    <location>
        <position position="124"/>
    </location>
    <ligand>
        <name>Ca(2+)</name>
        <dbReference type="ChEBI" id="CHEBI:29108"/>
    </ligand>
</feature>
<feature type="binding site" evidence="1">
    <location>
        <position position="227"/>
    </location>
    <ligand>
        <name>substrate</name>
    </ligand>
</feature>
<feature type="binding site" evidence="1">
    <location>
        <position position="239"/>
    </location>
    <ligand>
        <name>substrate</name>
    </ligand>
</feature>
<feature type="binding site" evidence="1">
    <location>
        <position position="240"/>
    </location>
    <ligand>
        <name>Ca(2+)</name>
        <dbReference type="ChEBI" id="CHEBI:29108"/>
    </ligand>
</feature>
<reference key="1">
    <citation type="journal article" date="2009" name="PLoS Genet.">
        <title>Organised genome dynamics in the Escherichia coli species results in highly diverse adaptive paths.</title>
        <authorList>
            <person name="Touchon M."/>
            <person name="Hoede C."/>
            <person name="Tenaillon O."/>
            <person name="Barbe V."/>
            <person name="Baeriswyl S."/>
            <person name="Bidet P."/>
            <person name="Bingen E."/>
            <person name="Bonacorsi S."/>
            <person name="Bouchier C."/>
            <person name="Bouvet O."/>
            <person name="Calteau A."/>
            <person name="Chiapello H."/>
            <person name="Clermont O."/>
            <person name="Cruveiller S."/>
            <person name="Danchin A."/>
            <person name="Diard M."/>
            <person name="Dossat C."/>
            <person name="Karoui M.E."/>
            <person name="Frapy E."/>
            <person name="Garry L."/>
            <person name="Ghigo J.M."/>
            <person name="Gilles A.M."/>
            <person name="Johnson J."/>
            <person name="Le Bouguenec C."/>
            <person name="Lescat M."/>
            <person name="Mangenot S."/>
            <person name="Martinez-Jehanne V."/>
            <person name="Matic I."/>
            <person name="Nassif X."/>
            <person name="Oztas S."/>
            <person name="Petit M.A."/>
            <person name="Pichon C."/>
            <person name="Rouy Z."/>
            <person name="Ruf C.S."/>
            <person name="Schneider D."/>
            <person name="Tourret J."/>
            <person name="Vacherie B."/>
            <person name="Vallenet D."/>
            <person name="Medigue C."/>
            <person name="Rocha E.P.C."/>
            <person name="Denamur E."/>
        </authorList>
    </citation>
    <scope>NUCLEOTIDE SEQUENCE [LARGE SCALE GENOMIC DNA]</scope>
    <source>
        <strain>UMN026 / ExPEC</strain>
    </source>
</reference>
<sequence>MEKRKIILDCDPGHDDAIAIMMAAKHPVIDLLGITIVAGNQTLDKTLINGLNVCQKLEINVPVYAGMPQPIMRQQIVADNIHGETGLDGPVFGPLTRQAESTHAVKYIIDTLMASDGDITLVPVGPLSNIAVAMRMQPAILPKIREIVLMGGAYGTGNFTPSAEFNIFADPEAARVVFTSGVPLVMMGLDLTNQTVCTPDVIARMERVGGPAGELFSDIMNFTLKTQFENYGLAGGPVHDATCIGYLINPDGIKTQEMYVEVDVNSGPCYGRTVCDELGVLGKPANTKVGITIDTDWFWGLVEECVRGYIKTH</sequence>